<sequence length="704" mass="78182">MQSTTSVKLSPFDLMTALLNGKVSFDTSNTSDTNIPLAVFMENRELLMILTTSVAVLIGCVVVLVWRRSSSAAKKAAESPVIVVPKKVTEDEVDDGRKKVTVFFGTQTGTAEGFAKALVEEAKARYEKAVFKVIDLDDYAAEDDEYEEKLKKESLAFFFLATYGDGEPTDNAARFYKWFTEGEEKGEWLEKLQYAVFGLGNRQYEHFNKIAKVVDEKLVEQGAKRLVPVGMGDDDQCIEDDFTAWKELVWPELDQLLRDEDDTSVATPYTAAVAEYRVVFHDKPETYDQDQLTNGHAVHDAQHPCRSNVAVKKELHSPLSDRSCTHLEFDISNTGLSYETGDHVGVYVENLSEVVDEAEKLIGLPPHTYFSVHTDNEDGTPLGGASLPPPFPPCTLRKALASYADVLSSPKKSALLALAAHATDSTEADRLKFLASPAGKDEYAQWIVASHRSLLEVMEAFPSAKPPLGVFFASVAPRLQPRYYSISSSPKFAPNRIHVTCALVYEQTPSGRVHKGVCSTWMKNAVPMTESQDCSWAPIYVRTSNFRLPSDPKVPVIMIGPGTGLAPFRGFLQERLAQKEAGTELGTAILFFGCRNRKVDFIYEDELNNFVETGALSELVTAFSREGATKEYVQHKMTQKASDIWNLLSEGAYLYVCGDAKGMAKDVHRTLHTIVQEQGSLDSSKAELYVKNLQMAGRYLRDVW</sequence>
<gene>
    <name evidence="9" type="primary">CPR1</name>
    <name evidence="7 8" type="synonym">CPR</name>
    <name evidence="13" type="ORF">CTI12_AA484860</name>
</gene>
<evidence type="ECO:0000255" key="1">
    <source>
        <dbReference type="HAMAP-Rule" id="MF_03212"/>
    </source>
</evidence>
<evidence type="ECO:0000255" key="2">
    <source>
        <dbReference type="PROSITE-ProRule" id="PRU00498"/>
    </source>
</evidence>
<evidence type="ECO:0000269" key="3">
    <source>
    </source>
</evidence>
<evidence type="ECO:0000269" key="4">
    <source>
    </source>
</evidence>
<evidence type="ECO:0000269" key="5">
    <source>
    </source>
</evidence>
<evidence type="ECO:0000269" key="6">
    <source>
    </source>
</evidence>
<evidence type="ECO:0000303" key="7">
    <source>
    </source>
</evidence>
<evidence type="ECO:0000303" key="8">
    <source>
    </source>
</evidence>
<evidence type="ECO:0000303" key="9">
    <source>
    </source>
</evidence>
<evidence type="ECO:0000303" key="10">
    <source>
    </source>
</evidence>
<evidence type="ECO:0000303" key="11">
    <source>
    </source>
</evidence>
<evidence type="ECO:0000305" key="12"/>
<evidence type="ECO:0000312" key="13">
    <source>
        <dbReference type="EMBL" id="PWA48849.1"/>
    </source>
</evidence>
<feature type="chain" id="PRO_0000451732" description="NADPH--cytochrome P450 reductase 1">
    <location>
        <begin position="1"/>
        <end position="704"/>
    </location>
</feature>
<feature type="topological domain" description="Lumenal" evidence="1">
    <location>
        <begin position="1"/>
        <end position="45"/>
    </location>
</feature>
<feature type="transmembrane region" description="Helical" evidence="1">
    <location>
        <begin position="46"/>
        <end position="66"/>
    </location>
</feature>
<feature type="topological domain" description="Cytoplasmic" evidence="1">
    <location>
        <begin position="67"/>
        <end position="704"/>
    </location>
</feature>
<feature type="domain" description="Flavodoxin-like" evidence="1">
    <location>
        <begin position="100"/>
        <end position="250"/>
    </location>
</feature>
<feature type="domain" description="FAD-binding FR-type" evidence="1">
    <location>
        <begin position="302"/>
        <end position="549"/>
    </location>
</feature>
<feature type="binding site" evidence="1">
    <location>
        <begin position="106"/>
        <end position="111"/>
    </location>
    <ligand>
        <name>FMN</name>
        <dbReference type="ChEBI" id="CHEBI:58210"/>
    </ligand>
</feature>
<feature type="binding site" evidence="1">
    <location>
        <begin position="161"/>
        <end position="164"/>
    </location>
    <ligand>
        <name>FMN</name>
        <dbReference type="ChEBI" id="CHEBI:58210"/>
    </ligand>
</feature>
<feature type="binding site" evidence="1">
    <location>
        <begin position="199"/>
        <end position="208"/>
    </location>
    <ligand>
        <name>FMN</name>
        <dbReference type="ChEBI" id="CHEBI:58210"/>
    </ligand>
</feature>
<feature type="binding site" evidence="1">
    <location>
        <position position="234"/>
    </location>
    <ligand>
        <name>FMN</name>
        <dbReference type="ChEBI" id="CHEBI:58210"/>
    </ligand>
</feature>
<feature type="binding site" evidence="1">
    <location>
        <position position="322"/>
    </location>
    <ligand>
        <name>NADP(+)</name>
        <dbReference type="ChEBI" id="CHEBI:58349"/>
    </ligand>
</feature>
<feature type="binding site" evidence="1">
    <location>
        <begin position="482"/>
        <end position="485"/>
    </location>
    <ligand>
        <name>FAD</name>
        <dbReference type="ChEBI" id="CHEBI:57692"/>
    </ligand>
</feature>
<feature type="binding site" evidence="1">
    <location>
        <begin position="500"/>
        <end position="502"/>
    </location>
    <ligand>
        <name>FAD</name>
        <dbReference type="ChEBI" id="CHEBI:57692"/>
    </ligand>
</feature>
<feature type="binding site" evidence="1">
    <location>
        <begin position="516"/>
        <end position="519"/>
    </location>
    <ligand>
        <name>FAD</name>
        <dbReference type="ChEBI" id="CHEBI:57692"/>
    </ligand>
</feature>
<feature type="binding site" evidence="1">
    <location>
        <position position="563"/>
    </location>
    <ligand>
        <name>NADP(+)</name>
        <dbReference type="ChEBI" id="CHEBI:58349"/>
    </ligand>
</feature>
<feature type="binding site" evidence="1">
    <location>
        <begin position="624"/>
        <end position="625"/>
    </location>
    <ligand>
        <name>NADP(+)</name>
        <dbReference type="ChEBI" id="CHEBI:58349"/>
    </ligand>
</feature>
<feature type="binding site" evidence="1">
    <location>
        <begin position="630"/>
        <end position="634"/>
    </location>
    <ligand>
        <name>NADP(+)</name>
        <dbReference type="ChEBI" id="CHEBI:58349"/>
    </ligand>
</feature>
<feature type="binding site" evidence="1">
    <location>
        <position position="666"/>
    </location>
    <ligand>
        <name>NADP(+)</name>
        <dbReference type="ChEBI" id="CHEBI:58349"/>
    </ligand>
</feature>
<feature type="binding site" evidence="1">
    <location>
        <position position="704"/>
    </location>
    <ligand>
        <name>FAD</name>
        <dbReference type="ChEBI" id="CHEBI:57692"/>
    </ligand>
</feature>
<feature type="glycosylation site" description="N-linked (GlcNAc...) asparagine" evidence="2">
    <location>
        <position position="29"/>
    </location>
</feature>
<feature type="sequence conflict" description="In Ref. 3; ABM88789." evidence="12" ref="3">
    <original>T</original>
    <variation>S</variation>
    <location>
        <position position="33"/>
    </location>
</feature>
<feature type="sequence conflict" description="In Ref. 5; AFO64618." evidence="12" ref="5">
    <original>K</original>
    <variation>R</variation>
    <location>
        <position position="75"/>
    </location>
</feature>
<feature type="sequence conflict" description="In Ref. 4; ABI98819, 3; ABM88789 and 1; ABC47946." evidence="12" ref="4 3 1">
    <original>E</original>
    <variation>D</variation>
    <location>
        <position position="190"/>
    </location>
</feature>
<feature type="sequence conflict" description="In Ref. 5; AFO64618." evidence="12" ref="5">
    <original>V</original>
    <variation>T</variation>
    <location>
        <position position="219"/>
    </location>
</feature>
<feature type="sequence conflict" description="In Ref. 1; ABC47946." evidence="12" ref="1">
    <original>A</original>
    <variation>G</variation>
    <location>
        <position position="274"/>
    </location>
</feature>
<feature type="sequence conflict" description="In Ref. 3; ABM88789." evidence="12" ref="3">
    <original>E</original>
    <variation>D</variation>
    <location>
        <position position="353"/>
    </location>
</feature>
<feature type="sequence conflict" description="In Ref. 5; AFO64618." evidence="12" ref="5">
    <original>VHT</original>
    <variation>IHA</variation>
    <location>
        <begin position="372"/>
        <end position="374"/>
    </location>
</feature>
<feature type="sequence conflict" description="In Ref. 2; ABL09938, 4; ABI98819 and 3; ABM88789." evidence="12" ref="2 4 3">
    <original>T</original>
    <variation>A</variation>
    <location>
        <position position="374"/>
    </location>
</feature>
<feature type="sequence conflict" description="In Ref. 1; ABC47946." evidence="12" ref="1">
    <original>L</original>
    <variation>F</variation>
    <location>
        <position position="434"/>
    </location>
</feature>
<feature type="sequence conflict" description="In Ref. 2; ABL09938 and 4; ABI98819." evidence="12" ref="2 4">
    <original>K</original>
    <variation>R</variation>
    <location>
        <position position="491"/>
    </location>
</feature>
<feature type="sequence conflict" description="In Ref. 2; ABL09938." evidence="12" ref="2">
    <original>C</original>
    <variation>S</variation>
    <location>
        <position position="501"/>
    </location>
</feature>
<feature type="sequence conflict" description="In Ref. 5; AFO64618." evidence="12" ref="5">
    <original>A</original>
    <variation>T</variation>
    <location>
        <position position="641"/>
    </location>
</feature>
<comment type="function">
    <text evidence="1 3">This enzyme is required for electron transfer from NADP to cytochrome P450 in microsomes (By similarity). It can also provide electron transfer to heme oxygenase and cytochrome B5 (By similarity). Involved in the biosynthesis of the antimalarial endoperoxide artemisinin (PubMed:16612385). Acts as a redox partner for CYP71AV1 which catalyzes the conversion of amorphadiene to more oxygenated products (PubMed:16612385).</text>
</comment>
<comment type="catalytic activity">
    <reaction evidence="1 3">
        <text>2 oxidized [cytochrome P450] + NADPH = 2 reduced [cytochrome P450] + NADP(+) + H(+)</text>
        <dbReference type="Rhea" id="RHEA:24040"/>
        <dbReference type="Rhea" id="RHEA-COMP:14627"/>
        <dbReference type="Rhea" id="RHEA-COMP:14628"/>
        <dbReference type="ChEBI" id="CHEBI:15378"/>
        <dbReference type="ChEBI" id="CHEBI:55376"/>
        <dbReference type="ChEBI" id="CHEBI:57783"/>
        <dbReference type="ChEBI" id="CHEBI:58349"/>
        <dbReference type="ChEBI" id="CHEBI:60344"/>
        <dbReference type="EC" id="1.6.2.4"/>
    </reaction>
</comment>
<comment type="cofactor">
    <cofactor evidence="1">
        <name>FAD</name>
        <dbReference type="ChEBI" id="CHEBI:57692"/>
    </cofactor>
    <text evidence="1">Binds 1 FAD per monomer.</text>
</comment>
<comment type="cofactor">
    <cofactor evidence="1">
        <name>FMN</name>
        <dbReference type="ChEBI" id="CHEBI:58210"/>
    </cofactor>
    <text evidence="1">Binds 1 FMN per monomer.</text>
</comment>
<comment type="biophysicochemical properties">
    <kinetics>
        <KM evidence="3">4.3 uM for cytochrome P450</KM>
        <KM evidence="3">23 uM for NADPH</KM>
    </kinetics>
</comment>
<comment type="subcellular location">
    <subcellularLocation>
        <location evidence="1">Endoplasmic reticulum membrane</location>
        <topology evidence="1">Single-pass membrane protein</topology>
        <orientation evidence="1">Cytoplasmic side</orientation>
    </subcellularLocation>
</comment>
<comment type="tissue specificity">
    <text evidence="6">Present in non-glandular trichome cells.</text>
</comment>
<comment type="biotechnology">
    <text evidence="10 11">Artemisinin and derivatives (e.g. artesunate), are antimalarial drugs due to their endoperoxidase properties; they also display multiple pharmacological actions against inflammation,viral infections, and cell and tumor proliferation (PubMed:32405226, PubMed:32514287). Artesunate may be a promising treatment for COVID-19 mediated by the severe acute respiratory syndrome coronavirus 2 (2019-nCoV) (SARS-CoV-2) because of its anti-inflammatory activity, NF-kappaB (nuclear factor kappa B)-coronavirus effect and chloroquine-like endocytosis inhibition mechanism (PubMed:32405226, PubMed:32514287).</text>
</comment>
<comment type="biotechnology">
    <text evidence="3 4 5">Yeast (S.cerevisiae) has been engineered to produce artemisinic-acid, a precursor of the antimalarial artemisinin compound, by expressing AMS1/ADS, CYP71AV1, ADH1 and ALDH1 in conjunction with CYB5 and CPR1.</text>
</comment>
<comment type="similarity">
    <text evidence="1">Belongs to the NADPH--cytochrome P450 reductase family.</text>
</comment>
<comment type="similarity">
    <text evidence="1">In the N-terminal section; belongs to the flavodoxin family.</text>
</comment>
<comment type="similarity">
    <text evidence="1">In the C-terminal section; belongs to the flavoprotein pyridine nucleotide cytochrome reductase family.</text>
</comment>
<comment type="sequence caution" evidence="12">
    <conflict type="erroneous initiation">
        <sequence resource="EMBL-CDS" id="PWA48849"/>
    </conflict>
    <text>Extended N-terminus.</text>
</comment>
<accession>A0A2U1LIM9</accession>
<accession>A1E3K2</accession>
<accession>A2TEY9</accession>
<accession>K7PQG7</accession>
<accession>Q001P5</accession>
<accession>Q1PQK4</accession>
<reference key="1">
    <citation type="journal article" date="2006" name="Nature">
        <title>Production of the antimalarial drug precursor artemisinic acid in engineered yeast.</title>
        <authorList>
            <person name="Ro D.-K."/>
            <person name="Paradise E.M."/>
            <person name="Ouellet M."/>
            <person name="Fisher K.J."/>
            <person name="Newman K.L."/>
            <person name="Ndungu J.M."/>
            <person name="Ho K.A."/>
            <person name="Eachus R.A."/>
            <person name="Ham T.S."/>
            <person name="Kirby J."/>
            <person name="Chang M.C.Y."/>
            <person name="Withers S.T."/>
            <person name="Shiba Y."/>
            <person name="Sarpong R."/>
            <person name="Keasling J.D."/>
        </authorList>
    </citation>
    <scope>NUCLEOTIDE SEQUENCE [MRNA]</scope>
    <scope>FUNCTION</scope>
    <scope>CATALYTIC ACTIVITY</scope>
    <scope>BIOPHYSICOCHEMICAL PROPERTIES</scope>
    <scope>BIOTECHNOLOGY</scope>
</reference>
<reference key="2">
    <citation type="submission" date="2006-11" db="EMBL/GenBank/DDBJ databases">
        <title>Induced expression and quantitation of artemisinin-related genes in Artemisia annua L.</title>
        <authorList>
            <person name="Yin L.L."/>
            <person name="Yang R.Y."/>
            <person name="Zeng Q.P."/>
        </authorList>
    </citation>
    <scope>NUCLEOTIDE SEQUENCE [GENOMIC DNA]</scope>
    <source>
        <tissue>Leaf</tissue>
    </source>
</reference>
<reference key="3">
    <citation type="submission" date="2006-12" db="EMBL/GenBank/DDBJ databases">
        <title>Production of artemisinic acid by engineered yeast.</title>
        <authorList>
            <person name="Kong J."/>
            <person name="Wang W."/>
            <person name="Cheng K."/>
        </authorList>
    </citation>
    <scope>NUCLEOTIDE SEQUENCE [MRNA]</scope>
</reference>
<reference key="4">
    <citation type="journal article" date="2008" name="Planta Med.">
        <title>Quantitative transcript profiling reveals down-regulation of A sterol pathway relevant gene and overexpression of artemisinin biogenetic genes in transgenic Artemisia annua plants.</title>
        <authorList>
            <person name="Yang R.-Y."/>
            <person name="Feng L.-L."/>
            <person name="Yang X.-Q."/>
            <person name="Yin L.-L."/>
            <person name="Xu X.-L."/>
            <person name="Zeng Q.-P."/>
        </authorList>
    </citation>
    <scope>NUCLEOTIDE SEQUENCE [MRNA]</scope>
    <source>
        <strain>cv. Feng-shun No.1</strain>
        <tissue>Leaf</tissue>
    </source>
</reference>
<reference key="5">
    <citation type="journal article" date="2012" name="Gene">
        <title>Characterization of cytochrome P450 monooxygenases isolated from trichome enriched fraction of Artemisia annua L. leaf.</title>
        <authorList>
            <person name="Misra A."/>
            <person name="Chanotiya C.S."/>
            <person name="Gupta M.M."/>
            <person name="Dwivedi U.N."/>
            <person name="Shasany A.K."/>
        </authorList>
    </citation>
    <scope>NUCLEOTIDE SEQUENCE [MRNA]</scope>
    <source>
        <strain>cv. CIM-Arogya</strain>
    </source>
</reference>
<reference key="6">
    <citation type="journal article" date="2018" name="Mol. Plant">
        <title>The genome of Artemisia annua provides insight into the evolution of Asteraceae family and artemisinin biosynthesis.</title>
        <authorList>
            <person name="Shen Q."/>
            <person name="Zhang L."/>
            <person name="Liao Z."/>
            <person name="Wang S."/>
            <person name="Yan T."/>
            <person name="Shi P."/>
            <person name="Liu M."/>
            <person name="Fu X."/>
            <person name="Pan Q."/>
            <person name="Wang Y."/>
            <person name="Lv Z."/>
            <person name="Lu X."/>
            <person name="Zhang F."/>
            <person name="Jiang W."/>
            <person name="Ma Y."/>
            <person name="Chen M."/>
            <person name="Hao X."/>
            <person name="Li L."/>
            <person name="Tang Y."/>
            <person name="Lv G."/>
            <person name="Zhou Y."/>
            <person name="Sun X."/>
            <person name="Brodelius P.E."/>
            <person name="Rose J.K.C."/>
            <person name="Tang K."/>
        </authorList>
    </citation>
    <scope>NUCLEOTIDE SEQUENCE [LARGE SCALE GENOMIC DNA]</scope>
    <source>
        <strain>cv. Huhao1</strain>
        <tissue>Leaf</tissue>
    </source>
</reference>
<reference key="7">
    <citation type="journal article" date="2012" name="Proc. Natl. Acad. Sci. U.S.A.">
        <title>Production of amorphadiene in yeast, and its conversion to dihydroartemisinic acid, precursor to the antimalarial agent artemisinin.</title>
        <authorList>
            <person name="Westfall P.J."/>
            <person name="Pitera D.J."/>
            <person name="Lenihan J.R."/>
            <person name="Eng D."/>
            <person name="Woolard F.X."/>
            <person name="Regentin R."/>
            <person name="Horning T."/>
            <person name="Tsuruta H."/>
            <person name="Melis D.J."/>
            <person name="Owens A."/>
            <person name="Fickes S."/>
            <person name="Diola D."/>
            <person name="Benjamin K.R."/>
            <person name="Keasling J.D."/>
            <person name="Leavell M.D."/>
            <person name="McPhee D.J."/>
            <person name="Renninger N.S."/>
            <person name="Newman J.D."/>
            <person name="Paddon C.J."/>
        </authorList>
    </citation>
    <scope>BIOTECHNOLOGY</scope>
</reference>
<reference key="8">
    <citation type="journal article" date="2013" name="Nature">
        <title>High-level semi-synthetic production of the potent antimalarial artemisinin.</title>
        <authorList>
            <person name="Paddon C.J."/>
            <person name="Westfall P.J."/>
            <person name="Pitera D.J."/>
            <person name="Benjamin K."/>
            <person name="Fisher K."/>
            <person name="McPhee D."/>
            <person name="Leavell M.D."/>
            <person name="Tai A."/>
            <person name="Main A."/>
            <person name="Eng D."/>
            <person name="Polichuk D.R."/>
            <person name="Teoh K.H."/>
            <person name="Reed D.W."/>
            <person name="Treynor T."/>
            <person name="Lenihan J."/>
            <person name="Fleck M."/>
            <person name="Bajad S."/>
            <person name="Dang G."/>
            <person name="Diola D."/>
            <person name="Dorin G."/>
            <person name="Ellens K.W."/>
            <person name="Fickes S."/>
            <person name="Galazzo J."/>
            <person name="Gaucher S.P."/>
            <person name="Geistlinger T."/>
            <person name="Henry R."/>
            <person name="Hepp M."/>
            <person name="Horning T."/>
            <person name="Iqbal T."/>
            <person name="Jiang H."/>
            <person name="Kizer L."/>
            <person name="Lieu B."/>
            <person name="Melis D."/>
            <person name="Moss N."/>
            <person name="Regentin R."/>
            <person name="Secrest S."/>
            <person name="Tsuruta H."/>
            <person name="Vazquez R."/>
            <person name="Westblade L.F."/>
            <person name="Xu L."/>
            <person name="Yu M."/>
            <person name="Zhang Y."/>
            <person name="Zhao L."/>
            <person name="Lievense J."/>
            <person name="Covello P.S."/>
            <person name="Keasling J.D."/>
            <person name="Reiling K.K."/>
            <person name="Renninger N.S."/>
            <person name="Newman J.D."/>
        </authorList>
    </citation>
    <scope>BIOTECHNOLOGY</scope>
</reference>
<reference key="9">
    <citation type="journal article" date="2019" name="Mol. Plant">
        <title>Artemisinin biosynthesis in non-glandular trichome cells of Artemisia annua.</title>
        <authorList>
            <person name="Judd R."/>
            <person name="Bagley M.C."/>
            <person name="Li M."/>
            <person name="Zhu Y."/>
            <person name="Lei C."/>
            <person name="Yuzuak S."/>
            <person name="Ekeloef M."/>
            <person name="Pu G."/>
            <person name="Zhao X."/>
            <person name="Muddiman D.C."/>
            <person name="Xie D.-Y."/>
        </authorList>
    </citation>
    <scope>TISSUE SPECIFICITY</scope>
</reference>
<reference key="10">
    <citation type="journal article" date="2020" name="Chin. Med. J.">
        <title>Artesunate: could be an alternative drug to chloroquine in COVID-19 treatment?</title>
        <authorList>
            <person name="Uzun T."/>
            <person name="Toptas O."/>
        </authorList>
    </citation>
    <scope>BIOTECHNOLOGY</scope>
</reference>
<reference key="11">
    <citation type="journal article" date="2020" name="Pharmacol. Res.">
        <title>Anti-malarial drug, artemisinin and its derivatives for the treatment of respiratory diseases.</title>
        <authorList>
            <person name="Cheong D.H.J."/>
            <person name="Tan D.W.S."/>
            <person name="Wong F.W.S."/>
            <person name="Tran T."/>
        </authorList>
    </citation>
    <scope>BIOTECHNOLOGY</scope>
    <scope>REVIEW</scope>
</reference>
<name>NCPR1_ARTAN</name>
<organism>
    <name type="scientific">Artemisia annua</name>
    <name type="common">Sweet wormwood</name>
    <dbReference type="NCBI Taxonomy" id="35608"/>
    <lineage>
        <taxon>Eukaryota</taxon>
        <taxon>Viridiplantae</taxon>
        <taxon>Streptophyta</taxon>
        <taxon>Embryophyta</taxon>
        <taxon>Tracheophyta</taxon>
        <taxon>Spermatophyta</taxon>
        <taxon>Magnoliopsida</taxon>
        <taxon>eudicotyledons</taxon>
        <taxon>Gunneridae</taxon>
        <taxon>Pentapetalae</taxon>
        <taxon>asterids</taxon>
        <taxon>campanulids</taxon>
        <taxon>Asterales</taxon>
        <taxon>Asteraceae</taxon>
        <taxon>Asteroideae</taxon>
        <taxon>Anthemideae</taxon>
        <taxon>Artemisiinae</taxon>
        <taxon>Artemisia</taxon>
    </lineage>
</organism>
<keyword id="KW-0256">Endoplasmic reticulum</keyword>
<keyword id="KW-0274">FAD</keyword>
<keyword id="KW-0285">Flavoprotein</keyword>
<keyword id="KW-0288">FMN</keyword>
<keyword id="KW-0325">Glycoprotein</keyword>
<keyword id="KW-0472">Membrane</keyword>
<keyword id="KW-0521">NADP</keyword>
<keyword id="KW-0560">Oxidoreductase</keyword>
<keyword id="KW-1185">Reference proteome</keyword>
<keyword id="KW-0812">Transmembrane</keyword>
<keyword id="KW-1133">Transmembrane helix</keyword>
<protein>
    <recommendedName>
        <fullName evidence="1 9">NADPH--cytochrome P450 reductase 1</fullName>
        <shortName evidence="1">CPR 1</shortName>
        <shortName evidence="1">P450R 1</shortName>
        <ecNumber evidence="1 3">1.6.2.4</ecNumber>
    </recommendedName>
</protein>
<dbReference type="EC" id="1.6.2.4" evidence="1 3"/>
<dbReference type="EMBL" id="DQ318192">
    <property type="protein sequence ID" value="ABC47946.1"/>
    <property type="molecule type" value="mRNA"/>
</dbReference>
<dbReference type="EMBL" id="EF104642">
    <property type="protein sequence ID" value="ABL09938.1"/>
    <property type="molecule type" value="Genomic_DNA"/>
</dbReference>
<dbReference type="EMBL" id="EF197890">
    <property type="protein sequence ID" value="ABM88789.1"/>
    <property type="molecule type" value="mRNA"/>
</dbReference>
<dbReference type="EMBL" id="DQ984181">
    <property type="protein sequence ID" value="ABI98819.1"/>
    <property type="molecule type" value="mRNA"/>
</dbReference>
<dbReference type="EMBL" id="JN594507">
    <property type="protein sequence ID" value="AFO64618.1"/>
    <property type="molecule type" value="mRNA"/>
</dbReference>
<dbReference type="EMBL" id="PKPP01009187">
    <property type="protein sequence ID" value="PWA48849.1"/>
    <property type="status" value="ALT_INIT"/>
    <property type="molecule type" value="Genomic_DNA"/>
</dbReference>
<dbReference type="SMR" id="A0A2U1LIM9"/>
<dbReference type="STRING" id="35608.A0A2U1LIM9"/>
<dbReference type="GlyCosmos" id="A0A2U1LIM9">
    <property type="glycosylation" value="1 site, No reported glycans"/>
</dbReference>
<dbReference type="OrthoDB" id="1856718at2759"/>
<dbReference type="Proteomes" id="UP000245207">
    <property type="component" value="Unassembled WGS sequence"/>
</dbReference>
<dbReference type="GO" id="GO:0005829">
    <property type="term" value="C:cytosol"/>
    <property type="evidence" value="ECO:0007669"/>
    <property type="project" value="TreeGrafter"/>
</dbReference>
<dbReference type="GO" id="GO:0005789">
    <property type="term" value="C:endoplasmic reticulum membrane"/>
    <property type="evidence" value="ECO:0007669"/>
    <property type="project" value="UniProtKB-SubCell"/>
</dbReference>
<dbReference type="GO" id="GO:0050660">
    <property type="term" value="F:flavin adenine dinucleotide binding"/>
    <property type="evidence" value="ECO:0007669"/>
    <property type="project" value="UniProtKB-UniRule"/>
</dbReference>
<dbReference type="GO" id="GO:0010181">
    <property type="term" value="F:FMN binding"/>
    <property type="evidence" value="ECO:0007669"/>
    <property type="project" value="UniProtKB-UniRule"/>
</dbReference>
<dbReference type="GO" id="GO:0050661">
    <property type="term" value="F:NADP binding"/>
    <property type="evidence" value="ECO:0007669"/>
    <property type="project" value="UniProtKB-UniRule"/>
</dbReference>
<dbReference type="GO" id="GO:0003958">
    <property type="term" value="F:NADPH-hemoprotein reductase activity"/>
    <property type="evidence" value="ECO:0000314"/>
    <property type="project" value="UniProtKB"/>
</dbReference>
<dbReference type="GO" id="GO:0016491">
    <property type="term" value="F:oxidoreductase activity"/>
    <property type="evidence" value="ECO:0000314"/>
    <property type="project" value="UniProtKB"/>
</dbReference>
<dbReference type="GO" id="GO:0051762">
    <property type="term" value="P:sesquiterpene biosynthetic process"/>
    <property type="evidence" value="ECO:0000314"/>
    <property type="project" value="UniProtKB"/>
</dbReference>
<dbReference type="CDD" id="cd06204">
    <property type="entry name" value="CYPOR"/>
    <property type="match status" value="1"/>
</dbReference>
<dbReference type="FunFam" id="1.20.990.10:FF:000003">
    <property type="entry name" value="NADPH--cytochrome P450 reductase"/>
    <property type="match status" value="1"/>
</dbReference>
<dbReference type="FunFam" id="3.40.50.360:FF:000023">
    <property type="entry name" value="NADPH--cytochrome P450 reductase"/>
    <property type="match status" value="1"/>
</dbReference>
<dbReference type="FunFam" id="3.40.50.80:FF:000001">
    <property type="entry name" value="NADPH--cytochrome P450 reductase 1"/>
    <property type="match status" value="1"/>
</dbReference>
<dbReference type="Gene3D" id="3.40.50.360">
    <property type="match status" value="1"/>
</dbReference>
<dbReference type="Gene3D" id="1.20.990.10">
    <property type="entry name" value="NADPH-cytochrome p450 Reductase, Chain A, domain 3"/>
    <property type="match status" value="1"/>
</dbReference>
<dbReference type="Gene3D" id="3.40.50.80">
    <property type="entry name" value="Nucleotide-binding domain of ferredoxin-NADP reductase (FNR) module"/>
    <property type="match status" value="1"/>
</dbReference>
<dbReference type="Gene3D" id="2.40.30.10">
    <property type="entry name" value="Translation factors"/>
    <property type="match status" value="1"/>
</dbReference>
<dbReference type="HAMAP" id="MF_03212">
    <property type="entry name" value="NCPR"/>
    <property type="match status" value="1"/>
</dbReference>
<dbReference type="InterPro" id="IPR003097">
    <property type="entry name" value="CysJ-like_FAD-binding"/>
</dbReference>
<dbReference type="InterPro" id="IPR017927">
    <property type="entry name" value="FAD-bd_FR_type"/>
</dbReference>
<dbReference type="InterPro" id="IPR001094">
    <property type="entry name" value="Flavdoxin-like"/>
</dbReference>
<dbReference type="InterPro" id="IPR008254">
    <property type="entry name" value="Flavodoxin/NO_synth"/>
</dbReference>
<dbReference type="InterPro" id="IPR001709">
    <property type="entry name" value="Flavoprot_Pyr_Nucl_cyt_Rdtase"/>
</dbReference>
<dbReference type="InterPro" id="IPR029039">
    <property type="entry name" value="Flavoprotein-like_sf"/>
</dbReference>
<dbReference type="InterPro" id="IPR039261">
    <property type="entry name" value="FNR_nucleotide-bd"/>
</dbReference>
<dbReference type="InterPro" id="IPR023173">
    <property type="entry name" value="NADPH_Cyt_P450_Rdtase_alpha"/>
</dbReference>
<dbReference type="InterPro" id="IPR001433">
    <property type="entry name" value="OxRdtase_FAD/NAD-bd"/>
</dbReference>
<dbReference type="InterPro" id="IPR023208">
    <property type="entry name" value="P450R"/>
</dbReference>
<dbReference type="InterPro" id="IPR017938">
    <property type="entry name" value="Riboflavin_synthase-like_b-brl"/>
</dbReference>
<dbReference type="PANTHER" id="PTHR19384:SF129">
    <property type="entry name" value="NADPH--CYTOCHROME P450 REDUCTASE"/>
    <property type="match status" value="1"/>
</dbReference>
<dbReference type="PANTHER" id="PTHR19384">
    <property type="entry name" value="NITRIC OXIDE SYNTHASE-RELATED"/>
    <property type="match status" value="1"/>
</dbReference>
<dbReference type="Pfam" id="PF00667">
    <property type="entry name" value="FAD_binding_1"/>
    <property type="match status" value="1"/>
</dbReference>
<dbReference type="Pfam" id="PF00258">
    <property type="entry name" value="Flavodoxin_1"/>
    <property type="match status" value="1"/>
</dbReference>
<dbReference type="Pfam" id="PF00175">
    <property type="entry name" value="NAD_binding_1"/>
    <property type="match status" value="1"/>
</dbReference>
<dbReference type="PIRSF" id="PIRSF000208">
    <property type="entry name" value="P450R"/>
    <property type="match status" value="1"/>
</dbReference>
<dbReference type="PRINTS" id="PR00369">
    <property type="entry name" value="FLAVODOXIN"/>
</dbReference>
<dbReference type="PRINTS" id="PR00371">
    <property type="entry name" value="FPNCR"/>
</dbReference>
<dbReference type="SUPFAM" id="SSF52343">
    <property type="entry name" value="Ferredoxin reductase-like, C-terminal NADP-linked domain"/>
    <property type="match status" value="1"/>
</dbReference>
<dbReference type="SUPFAM" id="SSF52218">
    <property type="entry name" value="Flavoproteins"/>
    <property type="match status" value="1"/>
</dbReference>
<dbReference type="SUPFAM" id="SSF63380">
    <property type="entry name" value="Riboflavin synthase domain-like"/>
    <property type="match status" value="1"/>
</dbReference>
<dbReference type="PROSITE" id="PS51384">
    <property type="entry name" value="FAD_FR"/>
    <property type="match status" value="1"/>
</dbReference>
<dbReference type="PROSITE" id="PS50902">
    <property type="entry name" value="FLAVODOXIN_LIKE"/>
    <property type="match status" value="1"/>
</dbReference>
<proteinExistence type="evidence at protein level"/>